<protein>
    <recommendedName>
        <fullName>Mediator of RNA polymerase II transcription subunit 11</fullName>
    </recommendedName>
    <alternativeName>
        <fullName>Mediator complex subunit 11</fullName>
    </alternativeName>
</protein>
<sequence>MATYGMANERLRALEEIEREIAAILLNAGNVILELSKEKPNERVLDKQATQFTASVQRVESELSGQIRYLTQVATGQPHEGSSYSARKDGTMALNRIDYARVKLAELSRTCDQMLEQP</sequence>
<dbReference type="EMBL" id="BC064722">
    <property type="protein sequence ID" value="AAH64722.1"/>
    <property type="molecule type" value="mRNA"/>
</dbReference>
<dbReference type="RefSeq" id="NP_989379.1">
    <property type="nucleotide sequence ID" value="NM_204048.1"/>
</dbReference>
<dbReference type="SMR" id="Q6P255"/>
<dbReference type="FunCoup" id="Q6P255">
    <property type="interactions" value="1324"/>
</dbReference>
<dbReference type="STRING" id="8364.ENSXETP00000037321"/>
<dbReference type="PaxDb" id="8364-ENSXETP00000010935"/>
<dbReference type="DNASU" id="395010"/>
<dbReference type="GeneID" id="395010"/>
<dbReference type="KEGG" id="xtr:395010"/>
<dbReference type="AGR" id="Xenbase:XB-GENE-974069"/>
<dbReference type="CTD" id="400569"/>
<dbReference type="Xenbase" id="XB-GENE-974069">
    <property type="gene designation" value="med11"/>
</dbReference>
<dbReference type="eggNOG" id="KOG4057">
    <property type="taxonomic scope" value="Eukaryota"/>
</dbReference>
<dbReference type="HOGENOM" id="CLU_123010_2_0_1"/>
<dbReference type="InParanoid" id="Q6P255"/>
<dbReference type="OMA" id="WHRIQHV"/>
<dbReference type="OrthoDB" id="5418434at2759"/>
<dbReference type="PhylomeDB" id="Q6P255"/>
<dbReference type="Proteomes" id="UP000008143">
    <property type="component" value="Chromosome 1"/>
</dbReference>
<dbReference type="GO" id="GO:0016592">
    <property type="term" value="C:mediator complex"/>
    <property type="evidence" value="ECO:0007669"/>
    <property type="project" value="InterPro"/>
</dbReference>
<dbReference type="GO" id="GO:0003712">
    <property type="term" value="F:transcription coregulator activity"/>
    <property type="evidence" value="ECO:0007669"/>
    <property type="project" value="InterPro"/>
</dbReference>
<dbReference type="GO" id="GO:0006357">
    <property type="term" value="P:regulation of transcription by RNA polymerase II"/>
    <property type="evidence" value="ECO:0007669"/>
    <property type="project" value="InterPro"/>
</dbReference>
<dbReference type="FunFam" id="1.10.287.3490:FF:000001">
    <property type="entry name" value="Mediator of RNA polymerase II transcription subunit 11"/>
    <property type="match status" value="1"/>
</dbReference>
<dbReference type="Gene3D" id="1.10.287.3490">
    <property type="match status" value="1"/>
</dbReference>
<dbReference type="InterPro" id="IPR019404">
    <property type="entry name" value="Mediator_Med11"/>
</dbReference>
<dbReference type="PANTHER" id="PTHR22890">
    <property type="entry name" value="MEDIATOR OF RNA POLYMERASE II TRANSCRIPTION SUBUNIT 11"/>
    <property type="match status" value="1"/>
</dbReference>
<dbReference type="Pfam" id="PF10280">
    <property type="entry name" value="Med11"/>
    <property type="match status" value="1"/>
</dbReference>
<evidence type="ECO:0000250" key="1"/>
<evidence type="ECO:0000250" key="2">
    <source>
        <dbReference type="UniProtKB" id="Q9P086"/>
    </source>
</evidence>
<evidence type="ECO:0000305" key="3"/>
<accession>Q6P255</accession>
<proteinExistence type="inferred from homology"/>
<name>MED11_XENTR</name>
<feature type="chain" id="PRO_0000304312" description="Mediator of RNA polymerase II transcription subunit 11">
    <location>
        <begin position="1"/>
        <end position="118"/>
    </location>
</feature>
<gene>
    <name type="primary">med11</name>
</gene>
<reference key="1">
    <citation type="submission" date="2003-12" db="EMBL/GenBank/DDBJ databases">
        <authorList>
            <consortium name="NIH - Xenopus Gene Collection (XGC) project"/>
        </authorList>
    </citation>
    <scope>NUCLEOTIDE SEQUENCE [LARGE SCALE MRNA]</scope>
    <source>
        <tissue>Embryo</tissue>
    </source>
</reference>
<comment type="function">
    <text evidence="2">Component of the Mediator complex, a coactivator involved in the regulated transcription of nearly all RNA polymerase II-dependent genes. Mediator functions as a bridge to convey information from gene-specific regulatory proteins to the basal RNA polymerase II transcription machinery. Mediator is recruited to promoters by direct interactions with regulatory proteins and serves as a scaffold for the assembly of a functional pre-initiation complex with RNA polymerase II and the general transcription factors (By similarity).</text>
</comment>
<comment type="subunit">
    <text evidence="1">Component of the Mediator complex.</text>
</comment>
<comment type="subcellular location">
    <subcellularLocation>
        <location evidence="3">Nucleus</location>
    </subcellularLocation>
</comment>
<comment type="similarity">
    <text evidence="3">Belongs to the Mediator complex subunit 11 family.</text>
</comment>
<organism>
    <name type="scientific">Xenopus tropicalis</name>
    <name type="common">Western clawed frog</name>
    <name type="synonym">Silurana tropicalis</name>
    <dbReference type="NCBI Taxonomy" id="8364"/>
    <lineage>
        <taxon>Eukaryota</taxon>
        <taxon>Metazoa</taxon>
        <taxon>Chordata</taxon>
        <taxon>Craniata</taxon>
        <taxon>Vertebrata</taxon>
        <taxon>Euteleostomi</taxon>
        <taxon>Amphibia</taxon>
        <taxon>Batrachia</taxon>
        <taxon>Anura</taxon>
        <taxon>Pipoidea</taxon>
        <taxon>Pipidae</taxon>
        <taxon>Xenopodinae</taxon>
        <taxon>Xenopus</taxon>
        <taxon>Silurana</taxon>
    </lineage>
</organism>
<keyword id="KW-0010">Activator</keyword>
<keyword id="KW-0539">Nucleus</keyword>
<keyword id="KW-1185">Reference proteome</keyword>
<keyword id="KW-0804">Transcription</keyword>
<keyword id="KW-0805">Transcription regulation</keyword>